<organism>
    <name type="scientific">Escherichia coli O6:K15:H31 (strain 536 / UPEC)</name>
    <dbReference type="NCBI Taxonomy" id="362663"/>
    <lineage>
        <taxon>Bacteria</taxon>
        <taxon>Pseudomonadati</taxon>
        <taxon>Pseudomonadota</taxon>
        <taxon>Gammaproteobacteria</taxon>
        <taxon>Enterobacterales</taxon>
        <taxon>Enterobacteriaceae</taxon>
        <taxon>Escherichia</taxon>
    </lineage>
</organism>
<keyword id="KW-0249">Electron transport</keyword>
<keyword id="KW-0813">Transport</keyword>
<dbReference type="EMBL" id="CP000247">
    <property type="protein sequence ID" value="ABG68083.1"/>
    <property type="molecule type" value="Genomic_DNA"/>
</dbReference>
<dbReference type="RefSeq" id="WP_000692229.1">
    <property type="nucleotide sequence ID" value="NC_008253.1"/>
</dbReference>
<dbReference type="SMR" id="Q0TLU8"/>
<dbReference type="KEGG" id="ecp:ECP_0041"/>
<dbReference type="HOGENOM" id="CLU_060196_2_2_6"/>
<dbReference type="UniPathway" id="UPA00117"/>
<dbReference type="Proteomes" id="UP000009182">
    <property type="component" value="Chromosome"/>
</dbReference>
<dbReference type="GO" id="GO:0009055">
    <property type="term" value="F:electron transfer activity"/>
    <property type="evidence" value="ECO:0007669"/>
    <property type="project" value="InterPro"/>
</dbReference>
<dbReference type="GO" id="GO:0009437">
    <property type="term" value="P:carnitine metabolic process"/>
    <property type="evidence" value="ECO:0007669"/>
    <property type="project" value="UniProtKB-UniRule"/>
</dbReference>
<dbReference type="CDD" id="cd01714">
    <property type="entry name" value="ETF_beta"/>
    <property type="match status" value="1"/>
</dbReference>
<dbReference type="FunFam" id="3.40.50.620:FF:000072">
    <property type="entry name" value="Protein FixA homolog"/>
    <property type="match status" value="1"/>
</dbReference>
<dbReference type="Gene3D" id="3.40.50.620">
    <property type="entry name" value="HUPs"/>
    <property type="match status" value="1"/>
</dbReference>
<dbReference type="HAMAP" id="MF_01055">
    <property type="entry name" value="FixA"/>
    <property type="match status" value="1"/>
</dbReference>
<dbReference type="InterPro" id="IPR000049">
    <property type="entry name" value="ET-Flavoprotein_bsu_CS"/>
</dbReference>
<dbReference type="InterPro" id="IPR014730">
    <property type="entry name" value="ETF_a/b_N"/>
</dbReference>
<dbReference type="InterPro" id="IPR012255">
    <property type="entry name" value="ETF_b"/>
</dbReference>
<dbReference type="InterPro" id="IPR033948">
    <property type="entry name" value="ETF_beta_N"/>
</dbReference>
<dbReference type="InterPro" id="IPR023463">
    <property type="entry name" value="FixA"/>
</dbReference>
<dbReference type="InterPro" id="IPR014729">
    <property type="entry name" value="Rossmann-like_a/b/a_fold"/>
</dbReference>
<dbReference type="NCBIfam" id="NF002888">
    <property type="entry name" value="PRK03359.1"/>
    <property type="match status" value="1"/>
</dbReference>
<dbReference type="PANTHER" id="PTHR21294">
    <property type="entry name" value="ELECTRON TRANSFER FLAVOPROTEIN BETA-SUBUNIT"/>
    <property type="match status" value="1"/>
</dbReference>
<dbReference type="PANTHER" id="PTHR21294:SF17">
    <property type="entry name" value="PROTEIN FIXA"/>
    <property type="match status" value="1"/>
</dbReference>
<dbReference type="Pfam" id="PF01012">
    <property type="entry name" value="ETF"/>
    <property type="match status" value="1"/>
</dbReference>
<dbReference type="PIRSF" id="PIRSF000090">
    <property type="entry name" value="Beta-ETF"/>
    <property type="match status" value="1"/>
</dbReference>
<dbReference type="SMART" id="SM00893">
    <property type="entry name" value="ETF"/>
    <property type="match status" value="1"/>
</dbReference>
<dbReference type="SUPFAM" id="SSF52402">
    <property type="entry name" value="Adenine nucleotide alpha hydrolases-like"/>
    <property type="match status" value="1"/>
</dbReference>
<dbReference type="PROSITE" id="PS01065">
    <property type="entry name" value="ETF_BETA"/>
    <property type="match status" value="1"/>
</dbReference>
<feature type="chain" id="PRO_0000300968" description="Protein FixA">
    <location>
        <begin position="1"/>
        <end position="256"/>
    </location>
</feature>
<evidence type="ECO:0000255" key="1">
    <source>
        <dbReference type="HAMAP-Rule" id="MF_01055"/>
    </source>
</evidence>
<sequence>MKIITCYKCVPDEQDIAVNNADGSLDFSKADAKISQYDLNAIEAACQLKQQAVEAQVTALSVGGKALTNAKGRKDVLSRGPDELIVVIDDQFEQALPQQTASVLAAAAQKAGFDLILCGDGSSDLYAQQVGLLVGEILNIPAVNGVSKIISLTADTLTVERELEDETETLSIPLPAVVAVSTDINSPQIPSMKAILGAAKKPVQVWSAADIGFNAEAAWSEQQVAAPKQRERQRIVIEGDGEEQIAAFAENLRKVI</sequence>
<reference key="1">
    <citation type="journal article" date="2006" name="Mol. Microbiol.">
        <title>Role of pathogenicity island-associated integrases in the genome plasticity of uropathogenic Escherichia coli strain 536.</title>
        <authorList>
            <person name="Hochhut B."/>
            <person name="Wilde C."/>
            <person name="Balling G."/>
            <person name="Middendorf B."/>
            <person name="Dobrindt U."/>
            <person name="Brzuszkiewicz E."/>
            <person name="Gottschalk G."/>
            <person name="Carniel E."/>
            <person name="Hacker J."/>
        </authorList>
    </citation>
    <scope>NUCLEOTIDE SEQUENCE [LARGE SCALE GENOMIC DNA]</scope>
    <source>
        <strain>536 / UPEC</strain>
    </source>
</reference>
<comment type="function">
    <text evidence="1">Required for anaerobic carnitine reduction. May bring reductant to CaiA.</text>
</comment>
<comment type="pathway">
    <text evidence="1">Amine and polyamine metabolism; carnitine metabolism.</text>
</comment>
<comment type="subunit">
    <text evidence="1">Heterodimer of FixA and FixB.</text>
</comment>
<comment type="similarity">
    <text evidence="1">Belongs to the ETF beta-subunit/FixA family.</text>
</comment>
<name>FIXA_ECOL5</name>
<protein>
    <recommendedName>
        <fullName evidence="1">Protein FixA</fullName>
    </recommendedName>
</protein>
<proteinExistence type="inferred from homology"/>
<accession>Q0TLU8</accession>
<gene>
    <name evidence="1" type="primary">fixA</name>
    <name type="ordered locus">ECP_0041</name>
</gene>